<reference key="1">
    <citation type="journal article" date="2002" name="Proc. Natl. Acad. Sci. U.S.A.">
        <title>Genome sequence and comparative microarray analysis of serotype M18 group A Streptococcus strains associated with acute rheumatic fever outbreaks.</title>
        <authorList>
            <person name="Smoot J.C."/>
            <person name="Barbian K.D."/>
            <person name="Van Gompel J.J."/>
            <person name="Smoot L.M."/>
            <person name="Chaussee M.S."/>
            <person name="Sylva G.L."/>
            <person name="Sturdevant D.E."/>
            <person name="Ricklefs S.M."/>
            <person name="Porcella S.F."/>
            <person name="Parkins L.D."/>
            <person name="Beres S.B."/>
            <person name="Campbell D.S."/>
            <person name="Smith T.M."/>
            <person name="Zhang Q."/>
            <person name="Kapur V."/>
            <person name="Daly J.A."/>
            <person name="Veasy L.G."/>
            <person name="Musser J.M."/>
        </authorList>
    </citation>
    <scope>NUCLEOTIDE SEQUENCE [LARGE SCALE GENOMIC DNA]</scope>
    <source>
        <strain>MGAS8232</strain>
    </source>
</reference>
<sequence>MAQLYYKYGTMNSGKTIEILKVAHNYEEQGKPVVIMTSALDTRDGFGIVSSRIGMRREAIPISNDMDIFTFIAQLEEKPYCVLIDESQFLSKQNVYDLARVVDELNVPVMAFGLKNDFQNNLFEGSKHLLLLADKIDEIKTICQYCSKKATMVLRTENGKPVYEGDQIQIGGNETYIPVCRKHYFNPEI</sequence>
<name>KITH_STRP8</name>
<organism>
    <name type="scientific">Streptococcus pyogenes serotype M18 (strain MGAS8232)</name>
    <dbReference type="NCBI Taxonomy" id="186103"/>
    <lineage>
        <taxon>Bacteria</taxon>
        <taxon>Bacillati</taxon>
        <taxon>Bacillota</taxon>
        <taxon>Bacilli</taxon>
        <taxon>Lactobacillales</taxon>
        <taxon>Streptococcaceae</taxon>
        <taxon>Streptococcus</taxon>
    </lineage>
</organism>
<accession>Q8P126</accession>
<proteinExistence type="inferred from homology"/>
<evidence type="ECO:0000255" key="1">
    <source>
        <dbReference type="HAMAP-Rule" id="MF_00124"/>
    </source>
</evidence>
<keyword id="KW-0067">ATP-binding</keyword>
<keyword id="KW-0963">Cytoplasm</keyword>
<keyword id="KW-0237">DNA synthesis</keyword>
<keyword id="KW-0418">Kinase</keyword>
<keyword id="KW-0479">Metal-binding</keyword>
<keyword id="KW-0547">Nucleotide-binding</keyword>
<keyword id="KW-0808">Transferase</keyword>
<keyword id="KW-0862">Zinc</keyword>
<dbReference type="EC" id="2.7.1.21" evidence="1"/>
<dbReference type="EMBL" id="AE009949">
    <property type="protein sequence ID" value="AAL97722.1"/>
    <property type="molecule type" value="Genomic_DNA"/>
</dbReference>
<dbReference type="RefSeq" id="WP_002989802.1">
    <property type="nucleotide sequence ID" value="NC_003485.1"/>
</dbReference>
<dbReference type="SMR" id="Q8P126"/>
<dbReference type="KEGG" id="spm:spyM18_1100"/>
<dbReference type="HOGENOM" id="CLU_064400_2_2_9"/>
<dbReference type="GO" id="GO:0005829">
    <property type="term" value="C:cytosol"/>
    <property type="evidence" value="ECO:0007669"/>
    <property type="project" value="TreeGrafter"/>
</dbReference>
<dbReference type="GO" id="GO:0005524">
    <property type="term" value="F:ATP binding"/>
    <property type="evidence" value="ECO:0007669"/>
    <property type="project" value="UniProtKB-UniRule"/>
</dbReference>
<dbReference type="GO" id="GO:0004797">
    <property type="term" value="F:thymidine kinase activity"/>
    <property type="evidence" value="ECO:0007669"/>
    <property type="project" value="UniProtKB-UniRule"/>
</dbReference>
<dbReference type="GO" id="GO:0008270">
    <property type="term" value="F:zinc ion binding"/>
    <property type="evidence" value="ECO:0007669"/>
    <property type="project" value="UniProtKB-UniRule"/>
</dbReference>
<dbReference type="GO" id="GO:0071897">
    <property type="term" value="P:DNA biosynthetic process"/>
    <property type="evidence" value="ECO:0007669"/>
    <property type="project" value="UniProtKB-KW"/>
</dbReference>
<dbReference type="GO" id="GO:0046104">
    <property type="term" value="P:thymidine metabolic process"/>
    <property type="evidence" value="ECO:0007669"/>
    <property type="project" value="TreeGrafter"/>
</dbReference>
<dbReference type="Gene3D" id="3.30.60.20">
    <property type="match status" value="1"/>
</dbReference>
<dbReference type="Gene3D" id="3.40.50.300">
    <property type="entry name" value="P-loop containing nucleotide triphosphate hydrolases"/>
    <property type="match status" value="1"/>
</dbReference>
<dbReference type="HAMAP" id="MF_00124">
    <property type="entry name" value="Thymidine_kinase"/>
    <property type="match status" value="1"/>
</dbReference>
<dbReference type="InterPro" id="IPR027417">
    <property type="entry name" value="P-loop_NTPase"/>
</dbReference>
<dbReference type="InterPro" id="IPR001267">
    <property type="entry name" value="Thymidine_kinase"/>
</dbReference>
<dbReference type="InterPro" id="IPR020633">
    <property type="entry name" value="Thymidine_kinase_CS"/>
</dbReference>
<dbReference type="NCBIfam" id="NF003299">
    <property type="entry name" value="PRK04296.1-4"/>
    <property type="match status" value="1"/>
</dbReference>
<dbReference type="NCBIfam" id="NF003300">
    <property type="entry name" value="PRK04296.1-5"/>
    <property type="match status" value="1"/>
</dbReference>
<dbReference type="PANTHER" id="PTHR11441">
    <property type="entry name" value="THYMIDINE KINASE"/>
    <property type="match status" value="1"/>
</dbReference>
<dbReference type="PANTHER" id="PTHR11441:SF0">
    <property type="entry name" value="THYMIDINE KINASE, CYTOSOLIC"/>
    <property type="match status" value="1"/>
</dbReference>
<dbReference type="Pfam" id="PF00265">
    <property type="entry name" value="TK"/>
    <property type="match status" value="1"/>
</dbReference>
<dbReference type="PIRSF" id="PIRSF035805">
    <property type="entry name" value="TK_cell"/>
    <property type="match status" value="1"/>
</dbReference>
<dbReference type="SUPFAM" id="SSF57716">
    <property type="entry name" value="Glucocorticoid receptor-like (DNA-binding domain)"/>
    <property type="match status" value="1"/>
</dbReference>
<dbReference type="SUPFAM" id="SSF52540">
    <property type="entry name" value="P-loop containing nucleoside triphosphate hydrolases"/>
    <property type="match status" value="1"/>
</dbReference>
<dbReference type="PROSITE" id="PS00603">
    <property type="entry name" value="TK_CELLULAR_TYPE"/>
    <property type="match status" value="1"/>
</dbReference>
<protein>
    <recommendedName>
        <fullName evidence="1">Thymidine kinase</fullName>
        <ecNumber evidence="1">2.7.1.21</ecNumber>
    </recommendedName>
</protein>
<comment type="catalytic activity">
    <reaction evidence="1">
        <text>thymidine + ATP = dTMP + ADP + H(+)</text>
        <dbReference type="Rhea" id="RHEA:19129"/>
        <dbReference type="ChEBI" id="CHEBI:15378"/>
        <dbReference type="ChEBI" id="CHEBI:17748"/>
        <dbReference type="ChEBI" id="CHEBI:30616"/>
        <dbReference type="ChEBI" id="CHEBI:63528"/>
        <dbReference type="ChEBI" id="CHEBI:456216"/>
        <dbReference type="EC" id="2.7.1.21"/>
    </reaction>
</comment>
<comment type="subunit">
    <text evidence="1">Homotetramer.</text>
</comment>
<comment type="subcellular location">
    <subcellularLocation>
        <location evidence="1">Cytoplasm</location>
    </subcellularLocation>
</comment>
<comment type="similarity">
    <text evidence="1">Belongs to the thymidine kinase family.</text>
</comment>
<feature type="chain" id="PRO_0000175037" description="Thymidine kinase">
    <location>
        <begin position="1"/>
        <end position="189"/>
    </location>
</feature>
<feature type="active site" description="Proton acceptor" evidence="1">
    <location>
        <position position="86"/>
    </location>
</feature>
<feature type="binding site" evidence="1">
    <location>
        <begin position="9"/>
        <end position="16"/>
    </location>
    <ligand>
        <name>ATP</name>
        <dbReference type="ChEBI" id="CHEBI:30616"/>
    </ligand>
</feature>
<feature type="binding site" evidence="1">
    <location>
        <begin position="85"/>
        <end position="88"/>
    </location>
    <ligand>
        <name>ATP</name>
        <dbReference type="ChEBI" id="CHEBI:30616"/>
    </ligand>
</feature>
<feature type="binding site" evidence="1">
    <location>
        <position position="143"/>
    </location>
    <ligand>
        <name>Zn(2+)</name>
        <dbReference type="ChEBI" id="CHEBI:29105"/>
    </ligand>
</feature>
<feature type="binding site" evidence="1">
    <location>
        <position position="146"/>
    </location>
    <ligand>
        <name>Zn(2+)</name>
        <dbReference type="ChEBI" id="CHEBI:29105"/>
    </ligand>
</feature>
<feature type="binding site" evidence="1">
    <location>
        <position position="180"/>
    </location>
    <ligand>
        <name>Zn(2+)</name>
        <dbReference type="ChEBI" id="CHEBI:29105"/>
    </ligand>
</feature>
<feature type="binding site" evidence="1">
    <location>
        <position position="183"/>
    </location>
    <ligand>
        <name>Zn(2+)</name>
        <dbReference type="ChEBI" id="CHEBI:29105"/>
    </ligand>
</feature>
<gene>
    <name evidence="1" type="primary">tdk</name>
    <name type="ordered locus">spyM18_1100</name>
</gene>